<evidence type="ECO:0000255" key="1">
    <source>
        <dbReference type="HAMAP-Rule" id="MF_01629"/>
    </source>
</evidence>
<protein>
    <recommendedName>
        <fullName evidence="1">Pyridoxine/pyridoxamine 5'-phosphate oxidase</fullName>
        <ecNumber evidence="1">1.4.3.5</ecNumber>
    </recommendedName>
    <alternativeName>
        <fullName evidence="1">PNP/PMP oxidase</fullName>
        <shortName evidence="1">PNPOx</shortName>
    </alternativeName>
    <alternativeName>
        <fullName evidence="1">Pyridoxal 5'-phosphate synthase</fullName>
    </alternativeName>
</protein>
<keyword id="KW-0285">Flavoprotein</keyword>
<keyword id="KW-0288">FMN</keyword>
<keyword id="KW-0560">Oxidoreductase</keyword>
<keyword id="KW-0664">Pyridoxine biosynthesis</keyword>
<keyword id="KW-1185">Reference proteome</keyword>
<sequence>MDSIAQLRKNYTFGQLSETEVPHHPLPLFQLWFDQAVKAECPEPNSMTLATADKAGNPSARIVLLKGADQNGFTFFTNYESQKGQDLAVRPQAALLFHWHELERQVRIKGLVERVSATESDEYFHSRPPASRIGAWASPQSAAIPNREFLEEAEKRFKSEFGEAPPRPEHWGGYRLRPTEMEFWQGRPSRLHDRIHYKLDGSNWKVTRLAP</sequence>
<gene>
    <name evidence="1" type="primary">pdxH</name>
    <name type="ordered locus">Pnuc_0663</name>
</gene>
<comment type="function">
    <text evidence="1">Catalyzes the oxidation of either pyridoxine 5'-phosphate (PNP) or pyridoxamine 5'-phosphate (PMP) into pyridoxal 5'-phosphate (PLP).</text>
</comment>
<comment type="catalytic activity">
    <reaction evidence="1">
        <text>pyridoxamine 5'-phosphate + O2 + H2O = pyridoxal 5'-phosphate + H2O2 + NH4(+)</text>
        <dbReference type="Rhea" id="RHEA:15817"/>
        <dbReference type="ChEBI" id="CHEBI:15377"/>
        <dbReference type="ChEBI" id="CHEBI:15379"/>
        <dbReference type="ChEBI" id="CHEBI:16240"/>
        <dbReference type="ChEBI" id="CHEBI:28938"/>
        <dbReference type="ChEBI" id="CHEBI:58451"/>
        <dbReference type="ChEBI" id="CHEBI:597326"/>
        <dbReference type="EC" id="1.4.3.5"/>
    </reaction>
</comment>
<comment type="catalytic activity">
    <reaction evidence="1">
        <text>pyridoxine 5'-phosphate + O2 = pyridoxal 5'-phosphate + H2O2</text>
        <dbReference type="Rhea" id="RHEA:15149"/>
        <dbReference type="ChEBI" id="CHEBI:15379"/>
        <dbReference type="ChEBI" id="CHEBI:16240"/>
        <dbReference type="ChEBI" id="CHEBI:58589"/>
        <dbReference type="ChEBI" id="CHEBI:597326"/>
        <dbReference type="EC" id="1.4.3.5"/>
    </reaction>
</comment>
<comment type="cofactor">
    <cofactor evidence="1">
        <name>FMN</name>
        <dbReference type="ChEBI" id="CHEBI:58210"/>
    </cofactor>
    <text evidence="1">Binds 1 FMN per subunit.</text>
</comment>
<comment type="pathway">
    <text evidence="1">Cofactor metabolism; pyridoxal 5'-phosphate salvage; pyridoxal 5'-phosphate from pyridoxamine 5'-phosphate: step 1/1.</text>
</comment>
<comment type="pathway">
    <text evidence="1">Cofactor metabolism; pyridoxal 5'-phosphate salvage; pyridoxal 5'-phosphate from pyridoxine 5'-phosphate: step 1/1.</text>
</comment>
<comment type="subunit">
    <text evidence="1">Homodimer.</text>
</comment>
<comment type="similarity">
    <text evidence="1">Belongs to the pyridoxamine 5'-phosphate oxidase family.</text>
</comment>
<organism>
    <name type="scientific">Polynucleobacter asymbioticus (strain DSM 18221 / CIP 109841 / QLW-P1DMWA-1)</name>
    <name type="common">Polynucleobacter necessarius subsp. asymbioticus</name>
    <dbReference type="NCBI Taxonomy" id="312153"/>
    <lineage>
        <taxon>Bacteria</taxon>
        <taxon>Pseudomonadati</taxon>
        <taxon>Pseudomonadota</taxon>
        <taxon>Betaproteobacteria</taxon>
        <taxon>Burkholderiales</taxon>
        <taxon>Burkholderiaceae</taxon>
        <taxon>Polynucleobacter</taxon>
    </lineage>
</organism>
<dbReference type="EC" id="1.4.3.5" evidence="1"/>
<dbReference type="EMBL" id="CP000655">
    <property type="protein sequence ID" value="ABP33881.1"/>
    <property type="molecule type" value="Genomic_DNA"/>
</dbReference>
<dbReference type="RefSeq" id="WP_011902506.1">
    <property type="nucleotide sequence ID" value="NC_009379.1"/>
</dbReference>
<dbReference type="SMR" id="A4SWL7"/>
<dbReference type="GeneID" id="31481020"/>
<dbReference type="KEGG" id="pnu:Pnuc_0663"/>
<dbReference type="eggNOG" id="COG0259">
    <property type="taxonomic scope" value="Bacteria"/>
</dbReference>
<dbReference type="HOGENOM" id="CLU_032263_2_2_4"/>
<dbReference type="UniPathway" id="UPA01068">
    <property type="reaction ID" value="UER00304"/>
</dbReference>
<dbReference type="UniPathway" id="UPA01068">
    <property type="reaction ID" value="UER00305"/>
</dbReference>
<dbReference type="Proteomes" id="UP000000231">
    <property type="component" value="Chromosome"/>
</dbReference>
<dbReference type="GO" id="GO:0010181">
    <property type="term" value="F:FMN binding"/>
    <property type="evidence" value="ECO:0007669"/>
    <property type="project" value="UniProtKB-UniRule"/>
</dbReference>
<dbReference type="GO" id="GO:0004733">
    <property type="term" value="F:pyridoxamine phosphate oxidase activity"/>
    <property type="evidence" value="ECO:0007669"/>
    <property type="project" value="UniProtKB-UniRule"/>
</dbReference>
<dbReference type="GO" id="GO:0008615">
    <property type="term" value="P:pyridoxine biosynthetic process"/>
    <property type="evidence" value="ECO:0007669"/>
    <property type="project" value="UniProtKB-KW"/>
</dbReference>
<dbReference type="FunFam" id="2.30.110.10:FF:000020">
    <property type="entry name" value="PNPO isoform 11"/>
    <property type="match status" value="1"/>
</dbReference>
<dbReference type="Gene3D" id="2.30.110.10">
    <property type="entry name" value="Electron Transport, Fmn-binding Protein, Chain A"/>
    <property type="match status" value="1"/>
</dbReference>
<dbReference type="HAMAP" id="MF_01629">
    <property type="entry name" value="PdxH"/>
    <property type="match status" value="1"/>
</dbReference>
<dbReference type="InterPro" id="IPR000659">
    <property type="entry name" value="Pyridox_Oxase"/>
</dbReference>
<dbReference type="InterPro" id="IPR019740">
    <property type="entry name" value="Pyridox_Oxase_CS"/>
</dbReference>
<dbReference type="InterPro" id="IPR011576">
    <property type="entry name" value="Pyridox_Oxase_N"/>
</dbReference>
<dbReference type="InterPro" id="IPR019576">
    <property type="entry name" value="Pyridoxamine_oxidase_dimer_C"/>
</dbReference>
<dbReference type="InterPro" id="IPR012349">
    <property type="entry name" value="Split_barrel_FMN-bd"/>
</dbReference>
<dbReference type="NCBIfam" id="TIGR00558">
    <property type="entry name" value="pdxH"/>
    <property type="match status" value="1"/>
</dbReference>
<dbReference type="NCBIfam" id="NF004231">
    <property type="entry name" value="PRK05679.1"/>
    <property type="match status" value="1"/>
</dbReference>
<dbReference type="PANTHER" id="PTHR10851:SF0">
    <property type="entry name" value="PYRIDOXINE-5'-PHOSPHATE OXIDASE"/>
    <property type="match status" value="1"/>
</dbReference>
<dbReference type="PANTHER" id="PTHR10851">
    <property type="entry name" value="PYRIDOXINE-5-PHOSPHATE OXIDASE"/>
    <property type="match status" value="1"/>
</dbReference>
<dbReference type="Pfam" id="PF10590">
    <property type="entry name" value="PNP_phzG_C"/>
    <property type="match status" value="1"/>
</dbReference>
<dbReference type="Pfam" id="PF01243">
    <property type="entry name" value="PNPOx_N"/>
    <property type="match status" value="1"/>
</dbReference>
<dbReference type="PIRSF" id="PIRSF000190">
    <property type="entry name" value="Pyd_amn-ph_oxd"/>
    <property type="match status" value="1"/>
</dbReference>
<dbReference type="SUPFAM" id="SSF50475">
    <property type="entry name" value="FMN-binding split barrel"/>
    <property type="match status" value="1"/>
</dbReference>
<dbReference type="PROSITE" id="PS01064">
    <property type="entry name" value="PYRIDOX_OXIDASE"/>
    <property type="match status" value="1"/>
</dbReference>
<reference key="1">
    <citation type="journal article" date="2012" name="Stand. Genomic Sci.">
        <title>Complete genome sequence of Polynucleobacter necessarius subsp. asymbioticus type strain (QLW-P1DMWA-1(T)).</title>
        <authorList>
            <person name="Meincke L."/>
            <person name="Copeland A."/>
            <person name="Lapidus A."/>
            <person name="Lucas S."/>
            <person name="Berry K.W."/>
            <person name="Del Rio T.G."/>
            <person name="Hammon N."/>
            <person name="Dalin E."/>
            <person name="Tice H."/>
            <person name="Pitluck S."/>
            <person name="Richardson P."/>
            <person name="Bruce D."/>
            <person name="Goodwin L."/>
            <person name="Han C."/>
            <person name="Tapia R."/>
            <person name="Detter J.C."/>
            <person name="Schmutz J."/>
            <person name="Brettin T."/>
            <person name="Larimer F."/>
            <person name="Land M."/>
            <person name="Hauser L."/>
            <person name="Kyrpides N.C."/>
            <person name="Ivanova N."/>
            <person name="Goker M."/>
            <person name="Woyke T."/>
            <person name="Wu Q.L."/>
            <person name="Pockl M."/>
            <person name="Hahn M.W."/>
            <person name="Klenk H.P."/>
        </authorList>
    </citation>
    <scope>NUCLEOTIDE SEQUENCE [LARGE SCALE GENOMIC DNA]</scope>
    <source>
        <strain>DSM 18221 / CIP 109841 / QLW-P1DMWA-1</strain>
    </source>
</reference>
<accession>A4SWL7</accession>
<name>PDXH_POLAQ</name>
<feature type="chain" id="PRO_1000088115" description="Pyridoxine/pyridoxamine 5'-phosphate oxidase">
    <location>
        <begin position="1"/>
        <end position="211"/>
    </location>
</feature>
<feature type="binding site" evidence="1">
    <location>
        <begin position="8"/>
        <end position="11"/>
    </location>
    <ligand>
        <name>substrate</name>
    </ligand>
</feature>
<feature type="binding site" evidence="1">
    <location>
        <begin position="61"/>
        <end position="66"/>
    </location>
    <ligand>
        <name>FMN</name>
        <dbReference type="ChEBI" id="CHEBI:58210"/>
    </ligand>
</feature>
<feature type="binding site" evidence="1">
    <location>
        <position position="66"/>
    </location>
    <ligand>
        <name>substrate</name>
    </ligand>
</feature>
<feature type="binding site" evidence="1">
    <location>
        <begin position="76"/>
        <end position="77"/>
    </location>
    <ligand>
        <name>FMN</name>
        <dbReference type="ChEBI" id="CHEBI:58210"/>
    </ligand>
</feature>
<feature type="binding site" evidence="1">
    <location>
        <position position="83"/>
    </location>
    <ligand>
        <name>FMN</name>
        <dbReference type="ChEBI" id="CHEBI:58210"/>
    </ligand>
</feature>
<feature type="binding site" evidence="1">
    <location>
        <position position="105"/>
    </location>
    <ligand>
        <name>FMN</name>
        <dbReference type="ChEBI" id="CHEBI:58210"/>
    </ligand>
</feature>
<feature type="binding site" evidence="1">
    <location>
        <position position="123"/>
    </location>
    <ligand>
        <name>substrate</name>
    </ligand>
</feature>
<feature type="binding site" evidence="1">
    <location>
        <position position="127"/>
    </location>
    <ligand>
        <name>substrate</name>
    </ligand>
</feature>
<feature type="binding site" evidence="1">
    <location>
        <position position="131"/>
    </location>
    <ligand>
        <name>substrate</name>
    </ligand>
</feature>
<feature type="binding site" evidence="1">
    <location>
        <begin position="140"/>
        <end position="141"/>
    </location>
    <ligand>
        <name>FMN</name>
        <dbReference type="ChEBI" id="CHEBI:58210"/>
    </ligand>
</feature>
<feature type="binding site" evidence="1">
    <location>
        <position position="184"/>
    </location>
    <ligand>
        <name>FMN</name>
        <dbReference type="ChEBI" id="CHEBI:58210"/>
    </ligand>
</feature>
<feature type="binding site" evidence="1">
    <location>
        <begin position="190"/>
        <end position="192"/>
    </location>
    <ligand>
        <name>substrate</name>
    </ligand>
</feature>
<feature type="binding site" evidence="1">
    <location>
        <position position="194"/>
    </location>
    <ligand>
        <name>FMN</name>
        <dbReference type="ChEBI" id="CHEBI:58210"/>
    </ligand>
</feature>
<proteinExistence type="inferred from homology"/>